<accession>A5USG0</accession>
<comment type="function">
    <text evidence="1">Formation of pseudouridine at positions 38, 39 and 40 in the anticodon stem and loop of transfer RNAs.</text>
</comment>
<comment type="catalytic activity">
    <reaction evidence="1">
        <text>uridine(38/39/40) in tRNA = pseudouridine(38/39/40) in tRNA</text>
        <dbReference type="Rhea" id="RHEA:22376"/>
        <dbReference type="Rhea" id="RHEA-COMP:10085"/>
        <dbReference type="Rhea" id="RHEA-COMP:10087"/>
        <dbReference type="ChEBI" id="CHEBI:65314"/>
        <dbReference type="ChEBI" id="CHEBI:65315"/>
        <dbReference type="EC" id="5.4.99.12"/>
    </reaction>
</comment>
<comment type="subunit">
    <text evidence="1">Homodimer.</text>
</comment>
<comment type="similarity">
    <text evidence="1">Belongs to the tRNA pseudouridine synthase TruA family.</text>
</comment>
<reference key="1">
    <citation type="submission" date="2007-04" db="EMBL/GenBank/DDBJ databases">
        <title>Complete sequence of Roseiflexus sp. RS-1.</title>
        <authorList>
            <consortium name="US DOE Joint Genome Institute"/>
            <person name="Copeland A."/>
            <person name="Lucas S."/>
            <person name="Lapidus A."/>
            <person name="Barry K."/>
            <person name="Detter J.C."/>
            <person name="Glavina del Rio T."/>
            <person name="Hammon N."/>
            <person name="Israni S."/>
            <person name="Dalin E."/>
            <person name="Tice H."/>
            <person name="Pitluck S."/>
            <person name="Chertkov O."/>
            <person name="Brettin T."/>
            <person name="Bruce D."/>
            <person name="Han C."/>
            <person name="Schmutz J."/>
            <person name="Larimer F."/>
            <person name="Land M."/>
            <person name="Hauser L."/>
            <person name="Kyrpides N."/>
            <person name="Mikhailova N."/>
            <person name="Bryant D.A."/>
            <person name="Richardson P."/>
        </authorList>
    </citation>
    <scope>NUCLEOTIDE SEQUENCE [LARGE SCALE GENOMIC DNA]</scope>
    <source>
        <strain>RS-1</strain>
    </source>
</reference>
<proteinExistence type="inferred from homology"/>
<sequence>MRNIALRIEYDGADFVGSQWQTNGRSVQGVLEAAWQQLTGERRRMTLAGRTDAGVHARGQVANVRTDTRHTISTIVRGLNGILPEDVGVLAAWEAPDDFHARYSAVRREYRYVIDNGRTPSPLLRRHAAYVPRRLDTAAMDAVVRQVIGTHDFAPLSDGPQEGSTVRICYEARCTRTEVWGQPLVLIDIAANAFLRHMVRNLVGTLIQVGEGRIDADRFAAVLAGDDRRARVLAPAHGLYLMAVRYPEDGTGAADEPAAPHGVTETRMQL</sequence>
<protein>
    <recommendedName>
        <fullName evidence="1">tRNA pseudouridine synthase A</fullName>
        <ecNumber evidence="1">5.4.99.12</ecNumber>
    </recommendedName>
    <alternativeName>
        <fullName evidence="1">tRNA pseudouridine(38-40) synthase</fullName>
    </alternativeName>
    <alternativeName>
        <fullName evidence="1">tRNA pseudouridylate synthase I</fullName>
    </alternativeName>
    <alternativeName>
        <fullName evidence="1">tRNA-uridine isomerase I</fullName>
    </alternativeName>
</protein>
<name>TRUA_ROSS1</name>
<dbReference type="EC" id="5.4.99.12" evidence="1"/>
<dbReference type="EMBL" id="CP000686">
    <property type="protein sequence ID" value="ABQ89563.1"/>
    <property type="molecule type" value="Genomic_DNA"/>
</dbReference>
<dbReference type="RefSeq" id="WP_011955916.1">
    <property type="nucleotide sequence ID" value="NC_009523.1"/>
</dbReference>
<dbReference type="SMR" id="A5USG0"/>
<dbReference type="STRING" id="357808.RoseRS_1156"/>
<dbReference type="KEGG" id="rrs:RoseRS_1156"/>
<dbReference type="eggNOG" id="COG0101">
    <property type="taxonomic scope" value="Bacteria"/>
</dbReference>
<dbReference type="HOGENOM" id="CLU_014673_0_1_0"/>
<dbReference type="OrthoDB" id="9811823at2"/>
<dbReference type="Proteomes" id="UP000006554">
    <property type="component" value="Chromosome"/>
</dbReference>
<dbReference type="GO" id="GO:0003723">
    <property type="term" value="F:RNA binding"/>
    <property type="evidence" value="ECO:0007669"/>
    <property type="project" value="InterPro"/>
</dbReference>
<dbReference type="GO" id="GO:0160147">
    <property type="term" value="F:tRNA pseudouridine(38-40) synthase activity"/>
    <property type="evidence" value="ECO:0007669"/>
    <property type="project" value="UniProtKB-EC"/>
</dbReference>
<dbReference type="GO" id="GO:0031119">
    <property type="term" value="P:tRNA pseudouridine synthesis"/>
    <property type="evidence" value="ECO:0007669"/>
    <property type="project" value="UniProtKB-UniRule"/>
</dbReference>
<dbReference type="CDD" id="cd02570">
    <property type="entry name" value="PseudoU_synth_EcTruA"/>
    <property type="match status" value="1"/>
</dbReference>
<dbReference type="FunFam" id="3.30.70.580:FF:000001">
    <property type="entry name" value="tRNA pseudouridine synthase A"/>
    <property type="match status" value="1"/>
</dbReference>
<dbReference type="Gene3D" id="3.30.70.660">
    <property type="entry name" value="Pseudouridine synthase I, catalytic domain, C-terminal subdomain"/>
    <property type="match status" value="1"/>
</dbReference>
<dbReference type="Gene3D" id="3.30.70.580">
    <property type="entry name" value="Pseudouridine synthase I, catalytic domain, N-terminal subdomain"/>
    <property type="match status" value="1"/>
</dbReference>
<dbReference type="HAMAP" id="MF_00171">
    <property type="entry name" value="TruA"/>
    <property type="match status" value="1"/>
</dbReference>
<dbReference type="InterPro" id="IPR020103">
    <property type="entry name" value="PsdUridine_synth_cat_dom_sf"/>
</dbReference>
<dbReference type="InterPro" id="IPR001406">
    <property type="entry name" value="PsdUridine_synth_TruA"/>
</dbReference>
<dbReference type="InterPro" id="IPR020097">
    <property type="entry name" value="PsdUridine_synth_TruA_a/b_dom"/>
</dbReference>
<dbReference type="InterPro" id="IPR020095">
    <property type="entry name" value="PsdUridine_synth_TruA_C"/>
</dbReference>
<dbReference type="InterPro" id="IPR020094">
    <property type="entry name" value="TruA/RsuA/RluB/E/F_N"/>
</dbReference>
<dbReference type="NCBIfam" id="TIGR00071">
    <property type="entry name" value="hisT_truA"/>
    <property type="match status" value="1"/>
</dbReference>
<dbReference type="PANTHER" id="PTHR11142">
    <property type="entry name" value="PSEUDOURIDYLATE SYNTHASE"/>
    <property type="match status" value="1"/>
</dbReference>
<dbReference type="PANTHER" id="PTHR11142:SF0">
    <property type="entry name" value="TRNA PSEUDOURIDINE SYNTHASE-LIKE 1"/>
    <property type="match status" value="1"/>
</dbReference>
<dbReference type="Pfam" id="PF01416">
    <property type="entry name" value="PseudoU_synth_1"/>
    <property type="match status" value="2"/>
</dbReference>
<dbReference type="PIRSF" id="PIRSF001430">
    <property type="entry name" value="tRNA_psdUrid_synth"/>
    <property type="match status" value="1"/>
</dbReference>
<dbReference type="SUPFAM" id="SSF55120">
    <property type="entry name" value="Pseudouridine synthase"/>
    <property type="match status" value="1"/>
</dbReference>
<gene>
    <name evidence="1" type="primary">truA</name>
    <name type="ordered locus">RoseRS_1156</name>
</gene>
<organism>
    <name type="scientific">Roseiflexus sp. (strain RS-1)</name>
    <dbReference type="NCBI Taxonomy" id="357808"/>
    <lineage>
        <taxon>Bacteria</taxon>
        <taxon>Bacillati</taxon>
        <taxon>Chloroflexota</taxon>
        <taxon>Chloroflexia</taxon>
        <taxon>Chloroflexales</taxon>
        <taxon>Roseiflexineae</taxon>
        <taxon>Roseiflexaceae</taxon>
        <taxon>Roseiflexus</taxon>
    </lineage>
</organism>
<evidence type="ECO:0000255" key="1">
    <source>
        <dbReference type="HAMAP-Rule" id="MF_00171"/>
    </source>
</evidence>
<evidence type="ECO:0000256" key="2">
    <source>
        <dbReference type="SAM" id="MobiDB-lite"/>
    </source>
</evidence>
<feature type="chain" id="PRO_1000017161" description="tRNA pseudouridine synthase A">
    <location>
        <begin position="1"/>
        <end position="270"/>
    </location>
</feature>
<feature type="region of interest" description="Disordered" evidence="2">
    <location>
        <begin position="251"/>
        <end position="270"/>
    </location>
</feature>
<feature type="active site" description="Nucleophile" evidence="1">
    <location>
        <position position="52"/>
    </location>
</feature>
<feature type="binding site" evidence="1">
    <location>
        <position position="110"/>
    </location>
    <ligand>
        <name>substrate</name>
    </ligand>
</feature>
<keyword id="KW-0413">Isomerase</keyword>
<keyword id="KW-0819">tRNA processing</keyword>